<comment type="subunit">
    <text evidence="2">The MON1A-CCZ1B complex interacts with RIMOC1 (PubMed:34432599). The MON1A-CCZ1B complex interacts with RAB7A and this interaction is enhanced in the presence of RIMOC1 (PubMed:34432599).</text>
</comment>
<comment type="subcellular location">
    <subcellularLocation>
        <location evidence="1">Lysosome membrane</location>
    </subcellularLocation>
</comment>
<comment type="similarity">
    <text evidence="3">Belongs to the CCZ1 family.</text>
</comment>
<protein>
    <recommendedName>
        <fullName>Vacuolar fusion protein CCZ1 homolog B</fullName>
    </recommendedName>
    <alternativeName>
        <fullName>Vacuolar fusion protein CCZ1 homolog-like</fullName>
    </alternativeName>
</protein>
<dbReference type="EMBL" id="AC079882">
    <property type="protein sequence ID" value="AAQ93370.1"/>
    <property type="molecule type" value="Genomic_DNA"/>
</dbReference>
<dbReference type="EMBL" id="BC010130">
    <property type="protein sequence ID" value="AAH10130.1"/>
    <property type="molecule type" value="mRNA"/>
</dbReference>
<dbReference type="CCDS" id="CCDS5354.1"/>
<dbReference type="PIR" id="T08806">
    <property type="entry name" value="T08806"/>
</dbReference>
<dbReference type="RefSeq" id="NP_932765.1">
    <property type="nucleotide sequence ID" value="NM_198097.5"/>
</dbReference>
<dbReference type="SMR" id="P86790"/>
<dbReference type="BioGRID" id="119643">
    <property type="interactions" value="99"/>
</dbReference>
<dbReference type="BioGRID" id="128773">
    <property type="interactions" value="17"/>
</dbReference>
<dbReference type="ComplexPortal" id="CPX-8165">
    <property type="entry name" value="MON1-CCZ1B guanyl-nucleotide exchange factor complex, MON1A variant"/>
</dbReference>
<dbReference type="ComplexPortal" id="CPX-8166">
    <property type="entry name" value="MON1-CCZ1B guanyl-nucleotide exchange factor complex, MON1B variant"/>
</dbReference>
<dbReference type="FunCoup" id="P86790">
    <property type="interactions" value="3300"/>
</dbReference>
<dbReference type="IntAct" id="P86790">
    <property type="interactions" value="55"/>
</dbReference>
<dbReference type="STRING" id="9606.ENSP00000314544"/>
<dbReference type="iPTMnet" id="P86790"/>
<dbReference type="PhosphoSitePlus" id="P86790"/>
<dbReference type="BioMuta" id="CCZ1B"/>
<dbReference type="DMDM" id="310943081"/>
<dbReference type="jPOST" id="P86790"/>
<dbReference type="MassIVE" id="P86790"/>
<dbReference type="PaxDb" id="9606-ENSP00000314544"/>
<dbReference type="PeptideAtlas" id="P86790"/>
<dbReference type="Pumba" id="P86790"/>
<dbReference type="Antibodypedia" id="69715">
    <property type="antibodies" value="41 antibodies from 10 providers"/>
</dbReference>
<dbReference type="DNASU" id="51622"/>
<dbReference type="Ensembl" id="ENST00000316731.13">
    <property type="protein sequence ID" value="ENSP00000314544.8"/>
    <property type="gene ID" value="ENSG00000146574.16"/>
</dbReference>
<dbReference type="GeneID" id="221960"/>
<dbReference type="KEGG" id="hsa:221960"/>
<dbReference type="KEGG" id="hsa:51622"/>
<dbReference type="MANE-Select" id="ENST00000316731.13">
    <property type="protein sequence ID" value="ENSP00000314544.8"/>
    <property type="RefSeq nucleotide sequence ID" value="NM_198097.5"/>
    <property type="RefSeq protein sequence ID" value="NP_932765.1"/>
</dbReference>
<dbReference type="AGR" id="HGNC:21691"/>
<dbReference type="AGR" id="HGNC:21717"/>
<dbReference type="CTD" id="221960"/>
<dbReference type="CTD" id="51622"/>
<dbReference type="DisGeNET" id="51622"/>
<dbReference type="GeneCards" id="CCZ1B"/>
<dbReference type="HGNC" id="HGNC:21717">
    <property type="gene designation" value="CCZ1B"/>
</dbReference>
<dbReference type="HPA" id="ENSG00000146574">
    <property type="expression patterns" value="Low tissue specificity"/>
</dbReference>
<dbReference type="neXtProt" id="NX_P86790"/>
<dbReference type="OpenTargets" id="ENSG00000122674"/>
<dbReference type="VEuPathDB" id="HostDB:ENSG00000146574"/>
<dbReference type="eggNOG" id="KOG2622">
    <property type="taxonomic scope" value="Eukaryota"/>
</dbReference>
<dbReference type="HOGENOM" id="CLU_037828_2_0_1"/>
<dbReference type="InParanoid" id="P86790"/>
<dbReference type="OMA" id="CEEQMKG"/>
<dbReference type="OrthoDB" id="240546at2759"/>
<dbReference type="PAN-GO" id="P86790">
    <property type="GO annotations" value="2 GO annotations based on evolutionary models"/>
</dbReference>
<dbReference type="PhylomeDB" id="P86790"/>
<dbReference type="TreeFam" id="TF314962"/>
<dbReference type="PathwayCommons" id="P86790"/>
<dbReference type="Reactome" id="R-HSA-8876198">
    <property type="pathway name" value="RAB GEFs exchange GTP for GDP on RABs"/>
</dbReference>
<dbReference type="SignaLink" id="P86790"/>
<dbReference type="BioGRID-ORCS" id="221960">
    <property type="hits" value="46 hits in 1021 CRISPR screens"/>
</dbReference>
<dbReference type="BioGRID-ORCS" id="51622">
    <property type="hits" value="28 hits in 372 CRISPR screens"/>
</dbReference>
<dbReference type="ChiTaRS" id="CCZ1B">
    <property type="organism name" value="human"/>
</dbReference>
<dbReference type="Pharos" id="P86790">
    <property type="development level" value="Tdark"/>
</dbReference>
<dbReference type="PRO" id="PR:P86790"/>
<dbReference type="Proteomes" id="UP000005640">
    <property type="component" value="Chromosome 7"/>
</dbReference>
<dbReference type="RNAct" id="P86790">
    <property type="molecule type" value="protein"/>
</dbReference>
<dbReference type="Bgee" id="ENSG00000146574">
    <property type="expression patterns" value="Expressed in calcaneal tendon and 96 other cell types or tissues"/>
</dbReference>
<dbReference type="ExpressionAtlas" id="P86790">
    <property type="expression patterns" value="baseline and differential"/>
</dbReference>
<dbReference type="GO" id="GO:0043231">
    <property type="term" value="C:intracellular membrane-bounded organelle"/>
    <property type="evidence" value="ECO:0000314"/>
    <property type="project" value="HPA"/>
</dbReference>
<dbReference type="GO" id="GO:0005765">
    <property type="term" value="C:lysosomal membrane"/>
    <property type="evidence" value="ECO:0007669"/>
    <property type="project" value="UniProtKB-SubCell"/>
</dbReference>
<dbReference type="GO" id="GO:0035658">
    <property type="term" value="C:Mon1-Ccz1 complex"/>
    <property type="evidence" value="ECO:0007669"/>
    <property type="project" value="InterPro"/>
</dbReference>
<dbReference type="GO" id="GO:0016192">
    <property type="term" value="P:vesicle-mediated transport"/>
    <property type="evidence" value="ECO:0000318"/>
    <property type="project" value="GO_Central"/>
</dbReference>
<dbReference type="InterPro" id="IPR013176">
    <property type="entry name" value="Ccz1"/>
</dbReference>
<dbReference type="InterPro" id="IPR043987">
    <property type="entry name" value="CCZ1/INTU/HSP4_longin_1"/>
</dbReference>
<dbReference type="InterPro" id="IPR043989">
    <property type="entry name" value="CCZ1/INTU/HSP4_longin_3"/>
</dbReference>
<dbReference type="InterPro" id="IPR043988">
    <property type="entry name" value="CCZ1/INTU_longin_2"/>
</dbReference>
<dbReference type="PANTHER" id="PTHR13056">
    <property type="entry name" value="VACUOLAR FUSION PROTEIN CCZ1 HOMOLOG-RELATED"/>
    <property type="match status" value="1"/>
</dbReference>
<dbReference type="PANTHER" id="PTHR13056:SF0">
    <property type="entry name" value="VACUOLAR FUSION PROTEIN CCZ1 HOMOLOG-RELATED"/>
    <property type="match status" value="1"/>
</dbReference>
<dbReference type="Pfam" id="PF19031">
    <property type="entry name" value="Intu_longin_1"/>
    <property type="match status" value="1"/>
</dbReference>
<dbReference type="Pfam" id="PF19032">
    <property type="entry name" value="Intu_longin_2"/>
    <property type="match status" value="1"/>
</dbReference>
<dbReference type="Pfam" id="PF19033">
    <property type="entry name" value="Intu_longin_3"/>
    <property type="match status" value="1"/>
</dbReference>
<feature type="initiator methionine" description="Removed" evidence="6 7">
    <location>
        <position position="1"/>
    </location>
</feature>
<feature type="chain" id="PRO_0000089584" description="Vacuolar fusion protein CCZ1 homolog B">
    <location>
        <begin position="2"/>
        <end position="482"/>
    </location>
</feature>
<feature type="modified residue" description="N-acetylalanine" evidence="6 7">
    <location>
        <position position="2"/>
    </location>
</feature>
<feature type="modified residue" description="Phosphoserine" evidence="8">
    <location>
        <position position="76"/>
    </location>
</feature>
<feature type="modified residue" description="Phosphoserine" evidence="4 5 8">
    <location>
        <position position="266"/>
    </location>
</feature>
<gene>
    <name type="primary">CCZ1B</name>
    <name type="synonym">C7orf28B</name>
</gene>
<sequence length="482" mass="55866">MAAAAAGAGSGPWAAQEKQFPPALLSFFIYNPRFGPREGQEENKILFYHPNEVEKNEKIRNVGLCEAIVQFTRTFSPSKPAKSLHTQKNRQFFNEPEENFWMVMVVRNPIIEKQSKDGKPVIEYQEEELLDKVYSSVLRQCYSMYKLFNGTFLKAMEDGGVKLLKERLEKFFHRYLQTLHLQSCDLLDIFGGISFFPLDKMTYLKIQSFINRMEESLNIVKYTAFLYNDQLIWSGLEQDDMRILYKYLTTSLFPRHIEPELAGRDSPIRAEMPGNLQHYGRFLTGPLNLNDPDAKCRFPKIFVNTDDTYEELHLIVYKAMSAAVCFMIDASVHPTLDFCRRLDSIVGPQLTVLASDICEQFNINKRMSGSEKEPQFKFIYFNHMNLAEKSTVHMRKTPSVSLTSVHPDLMKILGDINSDFTRVDEDEEIIVKAMSDYWVVGKKSDRRELYVILNQKNANLIEVNEEVKKLCATQFNNIFFLD</sequence>
<evidence type="ECO:0000269" key="1">
    <source>
    </source>
</evidence>
<evidence type="ECO:0000269" key="2">
    <source>
    </source>
</evidence>
<evidence type="ECO:0000305" key="3"/>
<evidence type="ECO:0007744" key="4">
    <source>
    </source>
</evidence>
<evidence type="ECO:0007744" key="5">
    <source>
    </source>
</evidence>
<evidence type="ECO:0007744" key="6">
    <source>
    </source>
</evidence>
<evidence type="ECO:0007744" key="7">
    <source>
    </source>
</evidence>
<evidence type="ECO:0007744" key="8">
    <source>
    </source>
</evidence>
<keyword id="KW-0007">Acetylation</keyword>
<keyword id="KW-0458">Lysosome</keyword>
<keyword id="KW-0472">Membrane</keyword>
<keyword id="KW-0597">Phosphoprotein</keyword>
<keyword id="KW-1185">Reference proteome</keyword>
<proteinExistence type="evidence at protein level"/>
<name>CCZ1B_HUMAN</name>
<accession>P86790</accession>
<accession>A2RU45</accession>
<accession>O95766</accession>
<accession>Q9UG65</accession>
<accession>Q9Y359</accession>
<organism>
    <name type="scientific">Homo sapiens</name>
    <name type="common">Human</name>
    <dbReference type="NCBI Taxonomy" id="9606"/>
    <lineage>
        <taxon>Eukaryota</taxon>
        <taxon>Metazoa</taxon>
        <taxon>Chordata</taxon>
        <taxon>Craniata</taxon>
        <taxon>Vertebrata</taxon>
        <taxon>Euteleostomi</taxon>
        <taxon>Mammalia</taxon>
        <taxon>Eutheria</taxon>
        <taxon>Euarchontoglires</taxon>
        <taxon>Primates</taxon>
        <taxon>Haplorrhini</taxon>
        <taxon>Catarrhini</taxon>
        <taxon>Hominidae</taxon>
        <taxon>Homo</taxon>
    </lineage>
</organism>
<reference key="1">
    <citation type="journal article" date="2003" name="Nature">
        <title>The DNA sequence of human chromosome 7.</title>
        <authorList>
            <person name="Hillier L.W."/>
            <person name="Fulton R.S."/>
            <person name="Fulton L.A."/>
            <person name="Graves T.A."/>
            <person name="Pepin K.H."/>
            <person name="Wagner-McPherson C."/>
            <person name="Layman D."/>
            <person name="Maas J."/>
            <person name="Jaeger S."/>
            <person name="Walker R."/>
            <person name="Wylie K."/>
            <person name="Sekhon M."/>
            <person name="Becker M.C."/>
            <person name="O'Laughlin M.D."/>
            <person name="Schaller M.E."/>
            <person name="Fewell G.A."/>
            <person name="Delehaunty K.D."/>
            <person name="Miner T.L."/>
            <person name="Nash W.E."/>
            <person name="Cordes M."/>
            <person name="Du H."/>
            <person name="Sun H."/>
            <person name="Edwards J."/>
            <person name="Bradshaw-Cordum H."/>
            <person name="Ali J."/>
            <person name="Andrews S."/>
            <person name="Isak A."/>
            <person name="Vanbrunt A."/>
            <person name="Nguyen C."/>
            <person name="Du F."/>
            <person name="Lamar B."/>
            <person name="Courtney L."/>
            <person name="Kalicki J."/>
            <person name="Ozersky P."/>
            <person name="Bielicki L."/>
            <person name="Scott K."/>
            <person name="Holmes A."/>
            <person name="Harkins R."/>
            <person name="Harris A."/>
            <person name="Strong C.M."/>
            <person name="Hou S."/>
            <person name="Tomlinson C."/>
            <person name="Dauphin-Kohlberg S."/>
            <person name="Kozlowicz-Reilly A."/>
            <person name="Leonard S."/>
            <person name="Rohlfing T."/>
            <person name="Rock S.M."/>
            <person name="Tin-Wollam A.-M."/>
            <person name="Abbott A."/>
            <person name="Minx P."/>
            <person name="Maupin R."/>
            <person name="Strowmatt C."/>
            <person name="Latreille P."/>
            <person name="Miller N."/>
            <person name="Johnson D."/>
            <person name="Murray J."/>
            <person name="Woessner J.P."/>
            <person name="Wendl M.C."/>
            <person name="Yang S.-P."/>
            <person name="Schultz B.R."/>
            <person name="Wallis J.W."/>
            <person name="Spieth J."/>
            <person name="Bieri T.A."/>
            <person name="Nelson J.O."/>
            <person name="Berkowicz N."/>
            <person name="Wohldmann P.E."/>
            <person name="Cook L.L."/>
            <person name="Hickenbotham M.T."/>
            <person name="Eldred J."/>
            <person name="Williams D."/>
            <person name="Bedell J.A."/>
            <person name="Mardis E.R."/>
            <person name="Clifton S.W."/>
            <person name="Chissoe S.L."/>
            <person name="Marra M.A."/>
            <person name="Raymond C."/>
            <person name="Haugen E."/>
            <person name="Gillett W."/>
            <person name="Zhou Y."/>
            <person name="James R."/>
            <person name="Phelps K."/>
            <person name="Iadanoto S."/>
            <person name="Bubb K."/>
            <person name="Simms E."/>
            <person name="Levy R."/>
            <person name="Clendenning J."/>
            <person name="Kaul R."/>
            <person name="Kent W.J."/>
            <person name="Furey T.S."/>
            <person name="Baertsch R.A."/>
            <person name="Brent M.R."/>
            <person name="Keibler E."/>
            <person name="Flicek P."/>
            <person name="Bork P."/>
            <person name="Suyama M."/>
            <person name="Bailey J.A."/>
            <person name="Portnoy M.E."/>
            <person name="Torrents D."/>
            <person name="Chinwalla A.T."/>
            <person name="Gish W.R."/>
            <person name="Eddy S.R."/>
            <person name="McPherson J.D."/>
            <person name="Olson M.V."/>
            <person name="Eichler E.E."/>
            <person name="Green E.D."/>
            <person name="Waterston R.H."/>
            <person name="Wilson R.K."/>
        </authorList>
    </citation>
    <scope>NUCLEOTIDE SEQUENCE [LARGE SCALE GENOMIC DNA]</scope>
</reference>
<reference key="2">
    <citation type="journal article" date="2004" name="Genome Res.">
        <title>The status, quality, and expansion of the NIH full-length cDNA project: the Mammalian Gene Collection (MGC).</title>
        <authorList>
            <consortium name="The MGC Project Team"/>
        </authorList>
    </citation>
    <scope>NUCLEOTIDE SEQUENCE [LARGE SCALE MRNA]</scope>
    <source>
        <tissue>Skin</tissue>
    </source>
</reference>
<reference key="3">
    <citation type="journal article" date="2007" name="Traffic">
        <title>Integral and associated lysosomal membrane proteins.</title>
        <authorList>
            <person name="Schroeder B."/>
            <person name="Wrocklage C."/>
            <person name="Pan C."/>
            <person name="Jaeger R."/>
            <person name="Koesters B."/>
            <person name="Schaefer H."/>
            <person name="Elsaesser H.-P."/>
            <person name="Mann M."/>
            <person name="Hasilik A."/>
        </authorList>
    </citation>
    <scope>SUBCELLULAR LOCATION [LARGE SCALE ANALYSIS]</scope>
    <source>
        <tissue>Placenta</tissue>
    </source>
</reference>
<reference key="4">
    <citation type="journal article" date="2008" name="J. Proteome Res.">
        <title>Combining protein-based IMAC, peptide-based IMAC, and MudPIT for efficient phosphoproteomic analysis.</title>
        <authorList>
            <person name="Cantin G.T."/>
            <person name="Yi W."/>
            <person name="Lu B."/>
            <person name="Park S.K."/>
            <person name="Xu T."/>
            <person name="Lee J.-D."/>
            <person name="Yates J.R. III"/>
        </authorList>
    </citation>
    <scope>PHOSPHORYLATION [LARGE SCALE ANALYSIS] AT SER-266</scope>
    <scope>IDENTIFICATION BY MASS SPECTROMETRY [LARGE SCALE ANALYSIS]</scope>
    <source>
        <tissue>Cervix carcinoma</tissue>
    </source>
</reference>
<reference key="5">
    <citation type="journal article" date="2008" name="Proc. Natl. Acad. Sci. U.S.A.">
        <title>A quantitative atlas of mitotic phosphorylation.</title>
        <authorList>
            <person name="Dephoure N."/>
            <person name="Zhou C."/>
            <person name="Villen J."/>
            <person name="Beausoleil S.A."/>
            <person name="Bakalarski C.E."/>
            <person name="Elledge S.J."/>
            <person name="Gygi S.P."/>
        </authorList>
    </citation>
    <scope>PHOSPHORYLATION [LARGE SCALE ANALYSIS] AT SER-266</scope>
    <scope>IDENTIFICATION BY MASS SPECTROMETRY [LARGE SCALE ANALYSIS]</scope>
    <source>
        <tissue>Cervix carcinoma</tissue>
    </source>
</reference>
<reference key="6">
    <citation type="journal article" date="2009" name="Anal. Chem.">
        <title>Lys-N and trypsin cover complementary parts of the phosphoproteome in a refined SCX-based approach.</title>
        <authorList>
            <person name="Gauci S."/>
            <person name="Helbig A.O."/>
            <person name="Slijper M."/>
            <person name="Krijgsveld J."/>
            <person name="Heck A.J."/>
            <person name="Mohammed S."/>
        </authorList>
    </citation>
    <scope>ACETYLATION [LARGE SCALE ANALYSIS] AT ALA-2</scope>
    <scope>CLEAVAGE OF INITIATOR METHIONINE [LARGE SCALE ANALYSIS]</scope>
    <scope>IDENTIFICATION BY MASS SPECTROMETRY [LARGE SCALE ANALYSIS]</scope>
</reference>
<reference key="7">
    <citation type="journal article" date="2011" name="BMC Syst. Biol.">
        <title>Initial characterization of the human central proteome.</title>
        <authorList>
            <person name="Burkard T.R."/>
            <person name="Planyavsky M."/>
            <person name="Kaupe I."/>
            <person name="Breitwieser F.P."/>
            <person name="Buerckstuemmer T."/>
            <person name="Bennett K.L."/>
            <person name="Superti-Furga G."/>
            <person name="Colinge J."/>
        </authorList>
    </citation>
    <scope>IDENTIFICATION BY MASS SPECTROMETRY [LARGE SCALE ANALYSIS]</scope>
</reference>
<reference key="8">
    <citation type="journal article" date="2012" name="Mol. Cell. Proteomics">
        <title>Comparative large-scale characterisation of plant vs. mammal proteins reveals similar and idiosyncratic N-alpha acetylation features.</title>
        <authorList>
            <person name="Bienvenut W.V."/>
            <person name="Sumpton D."/>
            <person name="Martinez A."/>
            <person name="Lilla S."/>
            <person name="Espagne C."/>
            <person name="Meinnel T."/>
            <person name="Giglione C."/>
        </authorList>
    </citation>
    <scope>ACETYLATION [LARGE SCALE ANALYSIS] AT ALA-2</scope>
    <scope>CLEAVAGE OF INITIATOR METHIONINE [LARGE SCALE ANALYSIS]</scope>
    <scope>IDENTIFICATION BY MASS SPECTROMETRY [LARGE SCALE ANALYSIS]</scope>
</reference>
<reference key="9">
    <citation type="journal article" date="2013" name="J. Proteome Res.">
        <title>Toward a comprehensive characterization of a human cancer cell phosphoproteome.</title>
        <authorList>
            <person name="Zhou H."/>
            <person name="Di Palma S."/>
            <person name="Preisinger C."/>
            <person name="Peng M."/>
            <person name="Polat A.N."/>
            <person name="Heck A.J."/>
            <person name="Mohammed S."/>
        </authorList>
    </citation>
    <scope>PHOSPHORYLATION [LARGE SCALE ANALYSIS] AT SER-76 AND SER-266</scope>
    <scope>IDENTIFICATION BY MASS SPECTROMETRY [LARGE SCALE ANALYSIS]</scope>
    <source>
        <tissue>Cervix carcinoma</tissue>
        <tissue>Erythroleukemia</tissue>
    </source>
</reference>
<reference key="10">
    <citation type="journal article" date="2022" name="Autophagy">
        <title>C5orf51 is a component of the MON1-CCZ1 complex and controls RAB7A localization and stability during mitophagy.</title>
        <authorList>
            <person name="Yan B.R."/>
            <person name="Li T."/>
            <person name="Coyaud E."/>
            <person name="Laurent E.M.N."/>
            <person name="St-Germain J."/>
            <person name="Zhou Y."/>
            <person name="Kim P.K."/>
            <person name="Raught B."/>
            <person name="Brumell J.H."/>
        </authorList>
    </citation>
    <scope>INTERACTION OF MON1A/CCZ1B COMPLEX WITH RIMOC1 AND RAB7A</scope>
</reference>